<gene>
    <name type="ordered locus">lwe1048</name>
</gene>
<dbReference type="EMBL" id="AM263198">
    <property type="protein sequence ID" value="CAK20466.1"/>
    <property type="molecule type" value="Genomic_DNA"/>
</dbReference>
<dbReference type="RefSeq" id="WP_011701871.1">
    <property type="nucleotide sequence ID" value="NC_008555.1"/>
</dbReference>
<dbReference type="SMR" id="A0AHI4"/>
<dbReference type="STRING" id="386043.lwe1048"/>
<dbReference type="GeneID" id="61188936"/>
<dbReference type="KEGG" id="lwe:lwe1048"/>
<dbReference type="eggNOG" id="COG4838">
    <property type="taxonomic scope" value="Bacteria"/>
</dbReference>
<dbReference type="HOGENOM" id="CLU_160493_1_0_9"/>
<dbReference type="OrthoDB" id="2135235at2"/>
<dbReference type="Proteomes" id="UP000000779">
    <property type="component" value="Chromosome"/>
</dbReference>
<dbReference type="Gene3D" id="1.10.287.750">
    <property type="entry name" value="SO2669-like"/>
    <property type="match status" value="1"/>
</dbReference>
<dbReference type="HAMAP" id="MF_01560">
    <property type="entry name" value="UPF0358"/>
    <property type="match status" value="1"/>
</dbReference>
<dbReference type="InterPro" id="IPR009983">
    <property type="entry name" value="UPF0358"/>
</dbReference>
<dbReference type="InterPro" id="IPR036270">
    <property type="entry name" value="UPF0358_sf"/>
</dbReference>
<dbReference type="NCBIfam" id="NF010187">
    <property type="entry name" value="PRK13666.1"/>
    <property type="match status" value="1"/>
</dbReference>
<dbReference type="Pfam" id="PF07408">
    <property type="entry name" value="DUF1507"/>
    <property type="match status" value="1"/>
</dbReference>
<dbReference type="SUPFAM" id="SSF140404">
    <property type="entry name" value="EF2458-like"/>
    <property type="match status" value="1"/>
</dbReference>
<feature type="chain" id="PRO_1000069003" description="UPF0358 protein lwe1048">
    <location>
        <begin position="1"/>
        <end position="93"/>
    </location>
</feature>
<organism>
    <name type="scientific">Listeria welshimeri serovar 6b (strain ATCC 35897 / DSM 20650 / CCUG 15529 / CIP 8149 / NCTC 11857 / SLCC 5334 / V8)</name>
    <dbReference type="NCBI Taxonomy" id="386043"/>
    <lineage>
        <taxon>Bacteria</taxon>
        <taxon>Bacillati</taxon>
        <taxon>Bacillota</taxon>
        <taxon>Bacilli</taxon>
        <taxon>Bacillales</taxon>
        <taxon>Listeriaceae</taxon>
        <taxon>Listeria</taxon>
    </lineage>
</organism>
<name>Y1048_LISW6</name>
<proteinExistence type="inferred from homology"/>
<evidence type="ECO:0000255" key="1">
    <source>
        <dbReference type="HAMAP-Rule" id="MF_01560"/>
    </source>
</evidence>
<protein>
    <recommendedName>
        <fullName evidence="1">UPF0358 protein lwe1048</fullName>
    </recommendedName>
</protein>
<comment type="similarity">
    <text evidence="1">Belongs to the UPF0358 family.</text>
</comment>
<reference key="1">
    <citation type="journal article" date="2006" name="J. Bacteriol.">
        <title>Whole-genome sequence of Listeria welshimeri reveals common steps in genome reduction with Listeria innocua as compared to Listeria monocytogenes.</title>
        <authorList>
            <person name="Hain T."/>
            <person name="Steinweg C."/>
            <person name="Kuenne C.T."/>
            <person name="Billion A."/>
            <person name="Ghai R."/>
            <person name="Chatterjee S.S."/>
            <person name="Domann E."/>
            <person name="Kaerst U."/>
            <person name="Goesmann A."/>
            <person name="Bekel T."/>
            <person name="Bartels D."/>
            <person name="Kaiser O."/>
            <person name="Meyer F."/>
            <person name="Puehler A."/>
            <person name="Weisshaar B."/>
            <person name="Wehland J."/>
            <person name="Liang C."/>
            <person name="Dandekar T."/>
            <person name="Lampidis R."/>
            <person name="Kreft J."/>
            <person name="Goebel W."/>
            <person name="Chakraborty T."/>
        </authorList>
    </citation>
    <scope>NUCLEOTIDE SEQUENCE [LARGE SCALE GENOMIC DNA]</scope>
    <source>
        <strain>ATCC 35897 / DSM 20650 / CCUG 15529 / CIP 8149 / NCTC 11857 / SLCC 5334 / V8</strain>
    </source>
</reference>
<sequence length="93" mass="10696">MANKKKDHREEAVELLKQDAKRILQLIKVQMDNLTLPQCPAYEEVLDTQMYGLSREINFATRLGLIEPEEGKNLISALEKELSTLHELSMSKK</sequence>
<accession>A0AHI4</accession>